<feature type="chain" id="PRO_1000000372" description="Adenine phosphoribosyltransferase">
    <location>
        <begin position="1"/>
        <end position="186"/>
    </location>
</feature>
<proteinExistence type="inferred from homology"/>
<gene>
    <name evidence="1" type="primary">apt</name>
    <name type="ordered locus">XC_1832</name>
</gene>
<sequence length="186" mass="19931">MNDCSRCAGSTSSGPAHWSGRIRDIADFPKPGIVFKDITPLLSDGPDFASALDEMAQPWRTTPLDAVLGIEARGFILGAALARELRTGFVPVRKPGKLPGRTLIQEYALEYGTDRIEMHEDALPRGARVLIVDDVLATGGTLRAALGLAAQLELEIVGAAVLVELLALQGRSKWLNDVPLLATLSY</sequence>
<dbReference type="EC" id="2.4.2.7" evidence="1"/>
<dbReference type="EMBL" id="CP000050">
    <property type="protein sequence ID" value="AAY48895.1"/>
    <property type="molecule type" value="Genomic_DNA"/>
</dbReference>
<dbReference type="RefSeq" id="WP_011037427.1">
    <property type="nucleotide sequence ID" value="NZ_CP155948.1"/>
</dbReference>
<dbReference type="SMR" id="Q4UVM8"/>
<dbReference type="KEGG" id="xcb:XC_1832"/>
<dbReference type="HOGENOM" id="CLU_063339_3_0_6"/>
<dbReference type="UniPathway" id="UPA00588">
    <property type="reaction ID" value="UER00646"/>
</dbReference>
<dbReference type="Proteomes" id="UP000000420">
    <property type="component" value="Chromosome"/>
</dbReference>
<dbReference type="GO" id="GO:0005737">
    <property type="term" value="C:cytoplasm"/>
    <property type="evidence" value="ECO:0007669"/>
    <property type="project" value="UniProtKB-SubCell"/>
</dbReference>
<dbReference type="GO" id="GO:0002055">
    <property type="term" value="F:adenine binding"/>
    <property type="evidence" value="ECO:0007669"/>
    <property type="project" value="TreeGrafter"/>
</dbReference>
<dbReference type="GO" id="GO:0003999">
    <property type="term" value="F:adenine phosphoribosyltransferase activity"/>
    <property type="evidence" value="ECO:0007669"/>
    <property type="project" value="UniProtKB-UniRule"/>
</dbReference>
<dbReference type="GO" id="GO:0016208">
    <property type="term" value="F:AMP binding"/>
    <property type="evidence" value="ECO:0007669"/>
    <property type="project" value="TreeGrafter"/>
</dbReference>
<dbReference type="GO" id="GO:0006168">
    <property type="term" value="P:adenine salvage"/>
    <property type="evidence" value="ECO:0007669"/>
    <property type="project" value="InterPro"/>
</dbReference>
<dbReference type="GO" id="GO:0044209">
    <property type="term" value="P:AMP salvage"/>
    <property type="evidence" value="ECO:0007669"/>
    <property type="project" value="UniProtKB-UniRule"/>
</dbReference>
<dbReference type="GO" id="GO:0006166">
    <property type="term" value="P:purine ribonucleoside salvage"/>
    <property type="evidence" value="ECO:0007669"/>
    <property type="project" value="UniProtKB-KW"/>
</dbReference>
<dbReference type="CDD" id="cd06223">
    <property type="entry name" value="PRTases_typeI"/>
    <property type="match status" value="1"/>
</dbReference>
<dbReference type="FunFam" id="3.40.50.2020:FF:000021">
    <property type="entry name" value="Adenine phosphoribosyltransferase"/>
    <property type="match status" value="1"/>
</dbReference>
<dbReference type="Gene3D" id="3.40.50.2020">
    <property type="match status" value="1"/>
</dbReference>
<dbReference type="HAMAP" id="MF_00004">
    <property type="entry name" value="Aden_phosphoribosyltr"/>
    <property type="match status" value="1"/>
</dbReference>
<dbReference type="InterPro" id="IPR005764">
    <property type="entry name" value="Ade_phspho_trans"/>
</dbReference>
<dbReference type="InterPro" id="IPR000836">
    <property type="entry name" value="PRibTrfase_dom"/>
</dbReference>
<dbReference type="InterPro" id="IPR029057">
    <property type="entry name" value="PRTase-like"/>
</dbReference>
<dbReference type="InterPro" id="IPR050054">
    <property type="entry name" value="UPRTase/APRTase"/>
</dbReference>
<dbReference type="NCBIfam" id="TIGR01090">
    <property type="entry name" value="apt"/>
    <property type="match status" value="1"/>
</dbReference>
<dbReference type="NCBIfam" id="NF002634">
    <property type="entry name" value="PRK02304.1-3"/>
    <property type="match status" value="1"/>
</dbReference>
<dbReference type="NCBIfam" id="NF002636">
    <property type="entry name" value="PRK02304.1-5"/>
    <property type="match status" value="1"/>
</dbReference>
<dbReference type="PANTHER" id="PTHR32315">
    <property type="entry name" value="ADENINE PHOSPHORIBOSYLTRANSFERASE"/>
    <property type="match status" value="1"/>
</dbReference>
<dbReference type="PANTHER" id="PTHR32315:SF3">
    <property type="entry name" value="ADENINE PHOSPHORIBOSYLTRANSFERASE"/>
    <property type="match status" value="1"/>
</dbReference>
<dbReference type="Pfam" id="PF00156">
    <property type="entry name" value="Pribosyltran"/>
    <property type="match status" value="1"/>
</dbReference>
<dbReference type="SUPFAM" id="SSF53271">
    <property type="entry name" value="PRTase-like"/>
    <property type="match status" value="1"/>
</dbReference>
<dbReference type="PROSITE" id="PS00103">
    <property type="entry name" value="PUR_PYR_PR_TRANSFER"/>
    <property type="match status" value="1"/>
</dbReference>
<accession>Q4UVM8</accession>
<name>APT_XANC8</name>
<keyword id="KW-0963">Cytoplasm</keyword>
<keyword id="KW-0328">Glycosyltransferase</keyword>
<keyword id="KW-0660">Purine salvage</keyword>
<keyword id="KW-0808">Transferase</keyword>
<organism>
    <name type="scientific">Xanthomonas campestris pv. campestris (strain 8004)</name>
    <dbReference type="NCBI Taxonomy" id="314565"/>
    <lineage>
        <taxon>Bacteria</taxon>
        <taxon>Pseudomonadati</taxon>
        <taxon>Pseudomonadota</taxon>
        <taxon>Gammaproteobacteria</taxon>
        <taxon>Lysobacterales</taxon>
        <taxon>Lysobacteraceae</taxon>
        <taxon>Xanthomonas</taxon>
    </lineage>
</organism>
<evidence type="ECO:0000255" key="1">
    <source>
        <dbReference type="HAMAP-Rule" id="MF_00004"/>
    </source>
</evidence>
<protein>
    <recommendedName>
        <fullName evidence="1">Adenine phosphoribosyltransferase</fullName>
        <shortName evidence="1">APRT</shortName>
        <ecNumber evidence="1">2.4.2.7</ecNumber>
    </recommendedName>
</protein>
<reference key="1">
    <citation type="journal article" date="2005" name="Genome Res.">
        <title>Comparative and functional genomic analyses of the pathogenicity of phytopathogen Xanthomonas campestris pv. campestris.</title>
        <authorList>
            <person name="Qian W."/>
            <person name="Jia Y."/>
            <person name="Ren S.-X."/>
            <person name="He Y.-Q."/>
            <person name="Feng J.-X."/>
            <person name="Lu L.-F."/>
            <person name="Sun Q."/>
            <person name="Ying G."/>
            <person name="Tang D.-J."/>
            <person name="Tang H."/>
            <person name="Wu W."/>
            <person name="Hao P."/>
            <person name="Wang L."/>
            <person name="Jiang B.-L."/>
            <person name="Zeng S."/>
            <person name="Gu W.-Y."/>
            <person name="Lu G."/>
            <person name="Rong L."/>
            <person name="Tian Y."/>
            <person name="Yao Z."/>
            <person name="Fu G."/>
            <person name="Chen B."/>
            <person name="Fang R."/>
            <person name="Qiang B."/>
            <person name="Chen Z."/>
            <person name="Zhao G.-P."/>
            <person name="Tang J.-L."/>
            <person name="He C."/>
        </authorList>
    </citation>
    <scope>NUCLEOTIDE SEQUENCE [LARGE SCALE GENOMIC DNA]</scope>
    <source>
        <strain>8004</strain>
    </source>
</reference>
<comment type="function">
    <text evidence="1">Catalyzes a salvage reaction resulting in the formation of AMP, that is energically less costly than de novo synthesis.</text>
</comment>
<comment type="catalytic activity">
    <reaction evidence="1">
        <text>AMP + diphosphate = 5-phospho-alpha-D-ribose 1-diphosphate + adenine</text>
        <dbReference type="Rhea" id="RHEA:16609"/>
        <dbReference type="ChEBI" id="CHEBI:16708"/>
        <dbReference type="ChEBI" id="CHEBI:33019"/>
        <dbReference type="ChEBI" id="CHEBI:58017"/>
        <dbReference type="ChEBI" id="CHEBI:456215"/>
        <dbReference type="EC" id="2.4.2.7"/>
    </reaction>
</comment>
<comment type="pathway">
    <text evidence="1">Purine metabolism; AMP biosynthesis via salvage pathway; AMP from adenine: step 1/1.</text>
</comment>
<comment type="subunit">
    <text evidence="1">Homodimer.</text>
</comment>
<comment type="subcellular location">
    <subcellularLocation>
        <location evidence="1">Cytoplasm</location>
    </subcellularLocation>
</comment>
<comment type="similarity">
    <text evidence="1">Belongs to the purine/pyrimidine phosphoribosyltransferase family.</text>
</comment>